<keyword id="KW-0963">Cytoplasm</keyword>
<keyword id="KW-0312">Gluconeogenesis</keyword>
<keyword id="KW-0324">Glycolysis</keyword>
<keyword id="KW-0413">Isomerase</keyword>
<proteinExistence type="inferred from homology"/>
<evidence type="ECO:0000255" key="1">
    <source>
        <dbReference type="PROSITE-ProRule" id="PRU10127"/>
    </source>
</evidence>
<comment type="catalytic activity">
    <reaction evidence="1">
        <text>D-glyceraldehyde 3-phosphate = dihydroxyacetone phosphate</text>
        <dbReference type="Rhea" id="RHEA:18585"/>
        <dbReference type="ChEBI" id="CHEBI:57642"/>
        <dbReference type="ChEBI" id="CHEBI:59776"/>
        <dbReference type="EC" id="5.3.1.1"/>
    </reaction>
</comment>
<comment type="pathway">
    <text evidence="1">Carbohydrate biosynthesis; gluconeogenesis.</text>
</comment>
<comment type="pathway">
    <text evidence="1">Carbohydrate degradation; glycolysis; D-glyceraldehyde 3-phosphate from glycerone phosphate: step 1/1.</text>
</comment>
<comment type="subunit">
    <text evidence="1">Homodimer.</text>
</comment>
<comment type="subcellular location">
    <subcellularLocation>
        <location evidence="1">Cytoplasm</location>
    </subcellularLocation>
</comment>
<comment type="similarity">
    <text evidence="1">Belongs to the triosephosphate isomerase family.</text>
</comment>
<reference key="1">
    <citation type="journal article" date="1993" name="J. Bacteriol.">
        <title>Identification of Mycoplasma pirum genes involved in the salvage pathways for nucleosides.</title>
        <authorList>
            <person name="Tham T.N."/>
            <person name="Ferris S."/>
            <person name="Kovacic R."/>
            <person name="Montagnier L."/>
            <person name="Blanchard A."/>
        </authorList>
    </citation>
    <scope>NUCLEOTIDE SEQUENCE [GENOMIC DNA]</scope>
    <source>
        <strain>BER</strain>
    </source>
</reference>
<accession>P47721</accession>
<sequence>MKKRIIIGNWKTNKTQKEVKEFFKILNASLKNKNICCTFGVAPVAIHLELAKSLAPKQMIIAAQDANYISSGAFTGTISWSQLKDIKIKYVIVGHSERRMYYNETDDIVNKKVKNLLENKMIPILCIGGNIEEFNNKKTYQVCATQLKKA</sequence>
<organism>
    <name type="scientific">Mycoplasmoides pirum</name>
    <name type="common">Mycoplasma pirum</name>
    <dbReference type="NCBI Taxonomy" id="2122"/>
    <lineage>
        <taxon>Bacteria</taxon>
        <taxon>Bacillati</taxon>
        <taxon>Mycoplasmatota</taxon>
        <taxon>Mycoplasmoidales</taxon>
        <taxon>Mycoplasmoidaceae</taxon>
        <taxon>Mycoplasmoides</taxon>
    </lineage>
</organism>
<dbReference type="EC" id="5.3.1.1"/>
<dbReference type="EMBL" id="L13289">
    <property type="protein sequence ID" value="AAA25435.1"/>
    <property type="molecule type" value="Genomic_DNA"/>
</dbReference>
<dbReference type="PIR" id="F53312">
    <property type="entry name" value="F53312"/>
</dbReference>
<dbReference type="SMR" id="P47721"/>
<dbReference type="UniPathway" id="UPA00109">
    <property type="reaction ID" value="UER00189"/>
</dbReference>
<dbReference type="UniPathway" id="UPA00138"/>
<dbReference type="GO" id="GO:0005829">
    <property type="term" value="C:cytosol"/>
    <property type="evidence" value="ECO:0007669"/>
    <property type="project" value="TreeGrafter"/>
</dbReference>
<dbReference type="GO" id="GO:0004807">
    <property type="term" value="F:triose-phosphate isomerase activity"/>
    <property type="evidence" value="ECO:0007669"/>
    <property type="project" value="UniProtKB-EC"/>
</dbReference>
<dbReference type="GO" id="GO:0006094">
    <property type="term" value="P:gluconeogenesis"/>
    <property type="evidence" value="ECO:0007669"/>
    <property type="project" value="UniProtKB-UniPathway"/>
</dbReference>
<dbReference type="GO" id="GO:0046166">
    <property type="term" value="P:glyceraldehyde-3-phosphate biosynthetic process"/>
    <property type="evidence" value="ECO:0007669"/>
    <property type="project" value="TreeGrafter"/>
</dbReference>
<dbReference type="GO" id="GO:0019563">
    <property type="term" value="P:glycerol catabolic process"/>
    <property type="evidence" value="ECO:0007669"/>
    <property type="project" value="TreeGrafter"/>
</dbReference>
<dbReference type="GO" id="GO:0006096">
    <property type="term" value="P:glycolytic process"/>
    <property type="evidence" value="ECO:0007669"/>
    <property type="project" value="UniProtKB-UniPathway"/>
</dbReference>
<dbReference type="CDD" id="cd00311">
    <property type="entry name" value="TIM"/>
    <property type="match status" value="1"/>
</dbReference>
<dbReference type="Gene3D" id="3.20.20.70">
    <property type="entry name" value="Aldolase class I"/>
    <property type="match status" value="1"/>
</dbReference>
<dbReference type="InterPro" id="IPR013785">
    <property type="entry name" value="Aldolase_TIM"/>
</dbReference>
<dbReference type="InterPro" id="IPR035990">
    <property type="entry name" value="TIM_sf"/>
</dbReference>
<dbReference type="InterPro" id="IPR000652">
    <property type="entry name" value="Triosephosphate_isomerase"/>
</dbReference>
<dbReference type="PANTHER" id="PTHR21139">
    <property type="entry name" value="TRIOSEPHOSPHATE ISOMERASE"/>
    <property type="match status" value="1"/>
</dbReference>
<dbReference type="PANTHER" id="PTHR21139:SF42">
    <property type="entry name" value="TRIOSEPHOSPHATE ISOMERASE"/>
    <property type="match status" value="1"/>
</dbReference>
<dbReference type="Pfam" id="PF00121">
    <property type="entry name" value="TIM"/>
    <property type="match status" value="1"/>
</dbReference>
<dbReference type="SUPFAM" id="SSF51351">
    <property type="entry name" value="Triosephosphate isomerase (TIM)"/>
    <property type="match status" value="1"/>
</dbReference>
<dbReference type="PROSITE" id="PS51440">
    <property type="entry name" value="TIM_2"/>
    <property type="match status" value="1"/>
</dbReference>
<protein>
    <recommendedName>
        <fullName>Triosephosphate isomerase</fullName>
        <shortName>TIM</shortName>
        <ecNumber>5.3.1.1</ecNumber>
    </recommendedName>
    <alternativeName>
        <fullName>Triose-phosphate isomerase</fullName>
    </alternativeName>
</protein>
<gene>
    <name type="primary">tpiA</name>
    <name type="synonym">tim</name>
    <name type="synonym">tpi</name>
</gene>
<feature type="chain" id="PRO_0000090253" description="Triosephosphate isomerase">
    <location>
        <begin position="1"/>
        <end position="150" status="greater than"/>
    </location>
</feature>
<feature type="active site" description="Electrophile" evidence="1">
    <location>
        <position position="95"/>
    </location>
</feature>
<feature type="binding site" evidence="1">
    <location>
        <position position="9"/>
    </location>
    <ligand>
        <name>substrate</name>
    </ligand>
</feature>
<feature type="binding site" evidence="1">
    <location>
        <position position="11"/>
    </location>
    <ligand>
        <name>substrate</name>
    </ligand>
</feature>
<feature type="non-terminal residue">
    <location>
        <position position="150"/>
    </location>
</feature>
<name>TPIS_MYCPI</name>